<gene>
    <name type="primary">NRPB2</name>
    <name type="synonym">EMB1989</name>
    <name type="synonym">RP140</name>
    <name type="synonym">RPB135</name>
    <name type="synonym">RPB2</name>
    <name type="ordered locus">At4g21710</name>
    <name type="ORF">F17L22.170</name>
</gene>
<name>NRPB2_ARATH</name>
<reference key="1">
    <citation type="journal article" date="1993" name="Nucleic Acids Res.">
        <title>The second largest subunit of RNA polymerase II from Arabidopsis thaliana.</title>
        <authorList>
            <person name="Larkin R."/>
            <person name="Guilfoyle T.J."/>
        </authorList>
    </citation>
    <scope>NUCLEOTIDE SEQUENCE [MRNA]</scope>
    <source>
        <strain>cv. Columbia</strain>
    </source>
</reference>
<reference key="2">
    <citation type="journal article" date="1999" name="Nature">
        <title>Sequence and analysis of chromosome 4 of the plant Arabidopsis thaliana.</title>
        <authorList>
            <person name="Mayer K.F.X."/>
            <person name="Schueller C."/>
            <person name="Wambutt R."/>
            <person name="Murphy G."/>
            <person name="Volckaert G."/>
            <person name="Pohl T."/>
            <person name="Duesterhoeft A."/>
            <person name="Stiekema W."/>
            <person name="Entian K.-D."/>
            <person name="Terryn N."/>
            <person name="Harris B."/>
            <person name="Ansorge W."/>
            <person name="Brandt P."/>
            <person name="Grivell L.A."/>
            <person name="Rieger M."/>
            <person name="Weichselgartner M."/>
            <person name="de Simone V."/>
            <person name="Obermaier B."/>
            <person name="Mache R."/>
            <person name="Mueller M."/>
            <person name="Kreis M."/>
            <person name="Delseny M."/>
            <person name="Puigdomenech P."/>
            <person name="Watson M."/>
            <person name="Schmidtheini T."/>
            <person name="Reichert B."/>
            <person name="Portetelle D."/>
            <person name="Perez-Alonso M."/>
            <person name="Boutry M."/>
            <person name="Bancroft I."/>
            <person name="Vos P."/>
            <person name="Hoheisel J."/>
            <person name="Zimmermann W."/>
            <person name="Wedler H."/>
            <person name="Ridley P."/>
            <person name="Langham S.-A."/>
            <person name="McCullagh B."/>
            <person name="Bilham L."/>
            <person name="Robben J."/>
            <person name="van der Schueren J."/>
            <person name="Grymonprez B."/>
            <person name="Chuang Y.-J."/>
            <person name="Vandenbussche F."/>
            <person name="Braeken M."/>
            <person name="Weltjens I."/>
            <person name="Voet M."/>
            <person name="Bastiaens I."/>
            <person name="Aert R."/>
            <person name="Defoor E."/>
            <person name="Weitzenegger T."/>
            <person name="Bothe G."/>
            <person name="Ramsperger U."/>
            <person name="Hilbert H."/>
            <person name="Braun M."/>
            <person name="Holzer E."/>
            <person name="Brandt A."/>
            <person name="Peters S."/>
            <person name="van Staveren M."/>
            <person name="Dirkse W."/>
            <person name="Mooijman P."/>
            <person name="Klein Lankhorst R."/>
            <person name="Rose M."/>
            <person name="Hauf J."/>
            <person name="Koetter P."/>
            <person name="Berneiser S."/>
            <person name="Hempel S."/>
            <person name="Feldpausch M."/>
            <person name="Lamberth S."/>
            <person name="Van den Daele H."/>
            <person name="De Keyser A."/>
            <person name="Buysshaert C."/>
            <person name="Gielen J."/>
            <person name="Villarroel R."/>
            <person name="De Clercq R."/>
            <person name="van Montagu M."/>
            <person name="Rogers J."/>
            <person name="Cronin A."/>
            <person name="Quail M.A."/>
            <person name="Bray-Allen S."/>
            <person name="Clark L."/>
            <person name="Doggett J."/>
            <person name="Hall S."/>
            <person name="Kay M."/>
            <person name="Lennard N."/>
            <person name="McLay K."/>
            <person name="Mayes R."/>
            <person name="Pettett A."/>
            <person name="Rajandream M.A."/>
            <person name="Lyne M."/>
            <person name="Benes V."/>
            <person name="Rechmann S."/>
            <person name="Borkova D."/>
            <person name="Bloecker H."/>
            <person name="Scharfe M."/>
            <person name="Grimm M."/>
            <person name="Loehnert T.-H."/>
            <person name="Dose S."/>
            <person name="de Haan M."/>
            <person name="Maarse A.C."/>
            <person name="Schaefer M."/>
            <person name="Mueller-Auer S."/>
            <person name="Gabel C."/>
            <person name="Fuchs M."/>
            <person name="Fartmann B."/>
            <person name="Granderath K."/>
            <person name="Dauner D."/>
            <person name="Herzl A."/>
            <person name="Neumann S."/>
            <person name="Argiriou A."/>
            <person name="Vitale D."/>
            <person name="Liguori R."/>
            <person name="Piravandi E."/>
            <person name="Massenet O."/>
            <person name="Quigley F."/>
            <person name="Clabauld G."/>
            <person name="Muendlein A."/>
            <person name="Felber R."/>
            <person name="Schnabl S."/>
            <person name="Hiller R."/>
            <person name="Schmidt W."/>
            <person name="Lecharny A."/>
            <person name="Aubourg S."/>
            <person name="Chefdor F."/>
            <person name="Cooke R."/>
            <person name="Berger C."/>
            <person name="Monfort A."/>
            <person name="Casacuberta E."/>
            <person name="Gibbons T."/>
            <person name="Weber N."/>
            <person name="Vandenbol M."/>
            <person name="Bargues M."/>
            <person name="Terol J."/>
            <person name="Torres A."/>
            <person name="Perez-Perez A."/>
            <person name="Purnelle B."/>
            <person name="Bent E."/>
            <person name="Johnson S."/>
            <person name="Tacon D."/>
            <person name="Jesse T."/>
            <person name="Heijnen L."/>
            <person name="Schwarz S."/>
            <person name="Scholler P."/>
            <person name="Heber S."/>
            <person name="Francs P."/>
            <person name="Bielke C."/>
            <person name="Frishman D."/>
            <person name="Haase D."/>
            <person name="Lemcke K."/>
            <person name="Mewes H.-W."/>
            <person name="Stocker S."/>
            <person name="Zaccaria P."/>
            <person name="Bevan M."/>
            <person name="Wilson R.K."/>
            <person name="de la Bastide M."/>
            <person name="Habermann K."/>
            <person name="Parnell L."/>
            <person name="Dedhia N."/>
            <person name="Gnoj L."/>
            <person name="Schutz K."/>
            <person name="Huang E."/>
            <person name="Spiegel L."/>
            <person name="Sekhon M."/>
            <person name="Murray J."/>
            <person name="Sheet P."/>
            <person name="Cordes M."/>
            <person name="Abu-Threideh J."/>
            <person name="Stoneking T."/>
            <person name="Kalicki J."/>
            <person name="Graves T."/>
            <person name="Harmon G."/>
            <person name="Edwards J."/>
            <person name="Latreille P."/>
            <person name="Courtney L."/>
            <person name="Cloud J."/>
            <person name="Abbott A."/>
            <person name="Scott K."/>
            <person name="Johnson D."/>
            <person name="Minx P."/>
            <person name="Bentley D."/>
            <person name="Fulton B."/>
            <person name="Miller N."/>
            <person name="Greco T."/>
            <person name="Kemp K."/>
            <person name="Kramer J."/>
            <person name="Fulton L."/>
            <person name="Mardis E."/>
            <person name="Dante M."/>
            <person name="Pepin K."/>
            <person name="Hillier L.W."/>
            <person name="Nelson J."/>
            <person name="Spieth J."/>
            <person name="Ryan E."/>
            <person name="Andrews S."/>
            <person name="Geisel C."/>
            <person name="Layman D."/>
            <person name="Du H."/>
            <person name="Ali J."/>
            <person name="Berghoff A."/>
            <person name="Jones K."/>
            <person name="Drone K."/>
            <person name="Cotton M."/>
            <person name="Joshu C."/>
            <person name="Antonoiu B."/>
            <person name="Zidanic M."/>
            <person name="Strong C."/>
            <person name="Sun H."/>
            <person name="Lamar B."/>
            <person name="Yordan C."/>
            <person name="Ma P."/>
            <person name="Zhong J."/>
            <person name="Preston R."/>
            <person name="Vil D."/>
            <person name="Shekher M."/>
            <person name="Matero A."/>
            <person name="Shah R."/>
            <person name="Swaby I.K."/>
            <person name="O'Shaughnessy A."/>
            <person name="Rodriguez M."/>
            <person name="Hoffman J."/>
            <person name="Till S."/>
            <person name="Granat S."/>
            <person name="Shohdy N."/>
            <person name="Hasegawa A."/>
            <person name="Hameed A."/>
            <person name="Lodhi M."/>
            <person name="Johnson A."/>
            <person name="Chen E."/>
            <person name="Marra M.A."/>
            <person name="Martienssen R."/>
            <person name="McCombie W.R."/>
        </authorList>
    </citation>
    <scope>NUCLEOTIDE SEQUENCE [LARGE SCALE GENOMIC DNA]</scope>
    <source>
        <strain>cv. Columbia</strain>
    </source>
</reference>
<reference key="3">
    <citation type="journal article" date="2017" name="Plant J.">
        <title>Araport11: a complete reannotation of the Arabidopsis thaliana reference genome.</title>
        <authorList>
            <person name="Cheng C.Y."/>
            <person name="Krishnakumar V."/>
            <person name="Chan A.P."/>
            <person name="Thibaud-Nissen F."/>
            <person name="Schobel S."/>
            <person name="Town C.D."/>
        </authorList>
    </citation>
    <scope>GENOME REANNOTATION</scope>
    <source>
        <strain>cv. Columbia</strain>
    </source>
</reference>
<reference key="4">
    <citation type="journal article" date="2007" name="Mol. Cell. Proteomics">
        <title>Multidimensional protein identification technology (MudPIT) analysis of ubiquitinated proteins in plants.</title>
        <authorList>
            <person name="Maor R."/>
            <person name="Jones A."/>
            <person name="Nuehse T.S."/>
            <person name="Studholme D.J."/>
            <person name="Peck S.C."/>
            <person name="Shirasu K."/>
        </authorList>
    </citation>
    <scope>IDENTIFICATION BY MASS SPECTROMETRY [LARGE SCALE ANALYSIS]</scope>
    <source>
        <strain>cv. Landsberg erecta</strain>
    </source>
</reference>
<reference key="5">
    <citation type="journal article" date="2008" name="Genetics">
        <title>Sex-biased lethality or transmission of defective transcription machinery in Arabidopsis.</title>
        <authorList>
            <person name="Onodera Y."/>
            <person name="Nakagawa K."/>
            <person name="Haag J.R."/>
            <person name="Pikaard D."/>
            <person name="Mikami T."/>
            <person name="Ream T."/>
            <person name="Ito Y."/>
            <person name="Pikaard C.S."/>
        </authorList>
    </citation>
    <scope>FUNCTION</scope>
    <scope>DISRUPTION PHENOTYPE</scope>
</reference>
<reference key="6">
    <citation type="journal article" date="2009" name="Mol. Cell">
        <title>Subunit compositions of the RNA-silencing enzymes Pol IV and Pol V reveal their origins as specialized forms of RNA polymerase II.</title>
        <authorList>
            <person name="Ream T.S."/>
            <person name="Haag J.R."/>
            <person name="Wierzbicki A.T."/>
            <person name="Nicora C.D."/>
            <person name="Norbeck A.D."/>
            <person name="Zhu J.K."/>
            <person name="Hagen G."/>
            <person name="Guilfoyle T.J."/>
            <person name="Pasa-Tolic L."/>
            <person name="Pikaard C.S."/>
        </authorList>
    </citation>
    <scope>FUNCTION</scope>
    <scope>IDENTIFICATION BY MASS SPECTROMETRY</scope>
    <scope>SUBUNIT</scope>
    <scope>NOMENCLATURE</scope>
</reference>
<dbReference type="EC" id="2.7.7.6"/>
<dbReference type="EMBL" id="Z19120">
    <property type="protein sequence ID" value="CAA79527.1"/>
    <property type="molecule type" value="mRNA"/>
</dbReference>
<dbReference type="EMBL" id="Z19121">
    <property type="protein sequence ID" value="CAA79528.1"/>
    <property type="molecule type" value="Genomic_DNA"/>
</dbReference>
<dbReference type="EMBL" id="AL035527">
    <property type="protein sequence ID" value="CAB36815.1"/>
    <property type="molecule type" value="Genomic_DNA"/>
</dbReference>
<dbReference type="EMBL" id="AL161555">
    <property type="protein sequence ID" value="CAB81278.1"/>
    <property type="molecule type" value="Genomic_DNA"/>
</dbReference>
<dbReference type="EMBL" id="CP002687">
    <property type="protein sequence ID" value="AEE84493.1"/>
    <property type="molecule type" value="Genomic_DNA"/>
</dbReference>
<dbReference type="PIR" id="T05846">
    <property type="entry name" value="T05846"/>
</dbReference>
<dbReference type="RefSeq" id="NP_193902.1">
    <property type="nucleotide sequence ID" value="NM_118291.4"/>
</dbReference>
<dbReference type="SMR" id="P38420"/>
<dbReference type="BioGRID" id="13548">
    <property type="interactions" value="37"/>
</dbReference>
<dbReference type="FunCoup" id="P38420">
    <property type="interactions" value="4763"/>
</dbReference>
<dbReference type="STRING" id="3702.P38420"/>
<dbReference type="GlyGen" id="P38420">
    <property type="glycosylation" value="1 site"/>
</dbReference>
<dbReference type="iPTMnet" id="P38420"/>
<dbReference type="PaxDb" id="3702-AT4G21710.1"/>
<dbReference type="ProteomicsDB" id="250565"/>
<dbReference type="EnsemblPlants" id="AT4G21710.1">
    <property type="protein sequence ID" value="AT4G21710.1"/>
    <property type="gene ID" value="AT4G21710"/>
</dbReference>
<dbReference type="GeneID" id="828259"/>
<dbReference type="Gramene" id="AT4G21710.1">
    <property type="protein sequence ID" value="AT4G21710.1"/>
    <property type="gene ID" value="AT4G21710"/>
</dbReference>
<dbReference type="KEGG" id="ath:AT4G21710"/>
<dbReference type="Araport" id="AT4G21710"/>
<dbReference type="TAIR" id="AT4G21710">
    <property type="gene designation" value="NRPB2"/>
</dbReference>
<dbReference type="eggNOG" id="KOG0214">
    <property type="taxonomic scope" value="Eukaryota"/>
</dbReference>
<dbReference type="HOGENOM" id="CLU_000524_5_2_1"/>
<dbReference type="InParanoid" id="P38420"/>
<dbReference type="OMA" id="CYDRNDS"/>
<dbReference type="OrthoDB" id="1038491at2759"/>
<dbReference type="PhylomeDB" id="P38420"/>
<dbReference type="CD-CODE" id="4299E36E">
    <property type="entry name" value="Nucleolus"/>
</dbReference>
<dbReference type="PRO" id="PR:P38420"/>
<dbReference type="Proteomes" id="UP000006548">
    <property type="component" value="Chromosome 4"/>
</dbReference>
<dbReference type="ExpressionAtlas" id="P38420">
    <property type="expression patterns" value="baseline and differential"/>
</dbReference>
<dbReference type="GO" id="GO:0005739">
    <property type="term" value="C:mitochondrion"/>
    <property type="evidence" value="ECO:0007669"/>
    <property type="project" value="GOC"/>
</dbReference>
<dbReference type="GO" id="GO:0009506">
    <property type="term" value="C:plasmodesma"/>
    <property type="evidence" value="ECO:0007005"/>
    <property type="project" value="TAIR"/>
</dbReference>
<dbReference type="GO" id="GO:0009536">
    <property type="term" value="C:plastid"/>
    <property type="evidence" value="ECO:0007669"/>
    <property type="project" value="GOC"/>
</dbReference>
<dbReference type="GO" id="GO:0005665">
    <property type="term" value="C:RNA polymerase II, core complex"/>
    <property type="evidence" value="ECO:0000314"/>
    <property type="project" value="UniProtKB"/>
</dbReference>
<dbReference type="GO" id="GO:0003677">
    <property type="term" value="F:DNA binding"/>
    <property type="evidence" value="ECO:0007669"/>
    <property type="project" value="InterPro"/>
</dbReference>
<dbReference type="GO" id="GO:0003899">
    <property type="term" value="F:DNA-directed RNA polymerase activity"/>
    <property type="evidence" value="ECO:0000250"/>
    <property type="project" value="TAIR"/>
</dbReference>
<dbReference type="GO" id="GO:0032549">
    <property type="term" value="F:ribonucleoside binding"/>
    <property type="evidence" value="ECO:0007669"/>
    <property type="project" value="InterPro"/>
</dbReference>
<dbReference type="GO" id="GO:0008270">
    <property type="term" value="F:zinc ion binding"/>
    <property type="evidence" value="ECO:0007669"/>
    <property type="project" value="UniProtKB-KW"/>
</dbReference>
<dbReference type="GO" id="GO:0006351">
    <property type="term" value="P:DNA-templated transcription"/>
    <property type="evidence" value="ECO:0007669"/>
    <property type="project" value="InterPro"/>
</dbReference>
<dbReference type="GO" id="GO:0035196">
    <property type="term" value="P:miRNA processing"/>
    <property type="evidence" value="ECO:0000315"/>
    <property type="project" value="TAIR"/>
</dbReference>
<dbReference type="CDD" id="cd00653">
    <property type="entry name" value="RNA_pol_B_RPB2"/>
    <property type="match status" value="1"/>
</dbReference>
<dbReference type="FunFam" id="2.40.270.10:FF:000011">
    <property type="entry name" value="DNA-directed RNA polymerase subunit beta"/>
    <property type="match status" value="1"/>
</dbReference>
<dbReference type="FunFam" id="2.40.50.150:FF:000002">
    <property type="entry name" value="DNA-directed RNA polymerase subunit beta"/>
    <property type="match status" value="1"/>
</dbReference>
<dbReference type="FunFam" id="3.90.1070.20:FF:000001">
    <property type="entry name" value="DNA-directed RNA polymerase subunit beta"/>
    <property type="match status" value="1"/>
</dbReference>
<dbReference type="FunFam" id="3.90.1100.10:FF:000003">
    <property type="entry name" value="DNA-directed RNA polymerase subunit beta"/>
    <property type="match status" value="1"/>
</dbReference>
<dbReference type="FunFam" id="3.90.1100.10:FF:000005">
    <property type="entry name" value="DNA-directed RNA polymerase subunit beta"/>
    <property type="match status" value="1"/>
</dbReference>
<dbReference type="FunFam" id="3.90.1110.10:FF:000005">
    <property type="entry name" value="DNA-directed RNA polymerase subunit beta"/>
    <property type="match status" value="1"/>
</dbReference>
<dbReference type="FunFam" id="3.90.1800.10:FF:000002">
    <property type="entry name" value="DNA-directed RNA polymerase subunit beta"/>
    <property type="match status" value="1"/>
</dbReference>
<dbReference type="Gene3D" id="2.40.50.150">
    <property type="match status" value="1"/>
</dbReference>
<dbReference type="Gene3D" id="3.90.1100.10">
    <property type="match status" value="1"/>
</dbReference>
<dbReference type="Gene3D" id="2.40.270.10">
    <property type="entry name" value="DNA-directed RNA polymerase, subunit 2, domain 6"/>
    <property type="match status" value="1"/>
</dbReference>
<dbReference type="Gene3D" id="3.90.1800.10">
    <property type="entry name" value="RNA polymerase alpha subunit dimerisation domain"/>
    <property type="match status" value="1"/>
</dbReference>
<dbReference type="Gene3D" id="3.90.1110.10">
    <property type="entry name" value="RNA polymerase Rpb2, domain 2"/>
    <property type="match status" value="1"/>
</dbReference>
<dbReference type="InterPro" id="IPR015712">
    <property type="entry name" value="DNA-dir_RNA_pol_su2"/>
</dbReference>
<dbReference type="InterPro" id="IPR007120">
    <property type="entry name" value="DNA-dir_RNAP_su2_dom"/>
</dbReference>
<dbReference type="InterPro" id="IPR037033">
    <property type="entry name" value="DNA-dir_RNAP_su2_hyb_sf"/>
</dbReference>
<dbReference type="InterPro" id="IPR007121">
    <property type="entry name" value="RNA_pol_bsu_CS"/>
</dbReference>
<dbReference type="InterPro" id="IPR007644">
    <property type="entry name" value="RNA_pol_bsu_protrusion"/>
</dbReference>
<dbReference type="InterPro" id="IPR007642">
    <property type="entry name" value="RNA_pol_Rpb2_2"/>
</dbReference>
<dbReference type="InterPro" id="IPR037034">
    <property type="entry name" value="RNA_pol_Rpb2_2_sf"/>
</dbReference>
<dbReference type="InterPro" id="IPR007645">
    <property type="entry name" value="RNA_pol_Rpb2_3"/>
</dbReference>
<dbReference type="InterPro" id="IPR007646">
    <property type="entry name" value="RNA_pol_Rpb2_4"/>
</dbReference>
<dbReference type="InterPro" id="IPR007647">
    <property type="entry name" value="RNA_pol_Rpb2_5"/>
</dbReference>
<dbReference type="InterPro" id="IPR007641">
    <property type="entry name" value="RNA_pol_Rpb2_7"/>
</dbReference>
<dbReference type="InterPro" id="IPR014724">
    <property type="entry name" value="RNA_pol_RPB2_OB-fold"/>
</dbReference>
<dbReference type="NCBIfam" id="NF007175">
    <property type="entry name" value="PRK09606.1"/>
    <property type="match status" value="1"/>
</dbReference>
<dbReference type="PANTHER" id="PTHR20856">
    <property type="entry name" value="DNA-DIRECTED RNA POLYMERASE I SUBUNIT 2"/>
    <property type="match status" value="1"/>
</dbReference>
<dbReference type="Pfam" id="PF04563">
    <property type="entry name" value="RNA_pol_Rpb2_1"/>
    <property type="match status" value="1"/>
</dbReference>
<dbReference type="Pfam" id="PF04561">
    <property type="entry name" value="RNA_pol_Rpb2_2"/>
    <property type="match status" value="1"/>
</dbReference>
<dbReference type="Pfam" id="PF04565">
    <property type="entry name" value="RNA_pol_Rpb2_3"/>
    <property type="match status" value="1"/>
</dbReference>
<dbReference type="Pfam" id="PF04566">
    <property type="entry name" value="RNA_pol_Rpb2_4"/>
    <property type="match status" value="1"/>
</dbReference>
<dbReference type="Pfam" id="PF04567">
    <property type="entry name" value="RNA_pol_Rpb2_5"/>
    <property type="match status" value="1"/>
</dbReference>
<dbReference type="Pfam" id="PF00562">
    <property type="entry name" value="RNA_pol_Rpb2_6"/>
    <property type="match status" value="1"/>
</dbReference>
<dbReference type="Pfam" id="PF04560">
    <property type="entry name" value="RNA_pol_Rpb2_7"/>
    <property type="match status" value="1"/>
</dbReference>
<dbReference type="SUPFAM" id="SSF64484">
    <property type="entry name" value="beta and beta-prime subunits of DNA dependent RNA-polymerase"/>
    <property type="match status" value="1"/>
</dbReference>
<dbReference type="PROSITE" id="PS01166">
    <property type="entry name" value="RNA_POL_BETA"/>
    <property type="match status" value="1"/>
</dbReference>
<proteinExistence type="evidence at protein level"/>
<organism>
    <name type="scientific">Arabidopsis thaliana</name>
    <name type="common">Mouse-ear cress</name>
    <dbReference type="NCBI Taxonomy" id="3702"/>
    <lineage>
        <taxon>Eukaryota</taxon>
        <taxon>Viridiplantae</taxon>
        <taxon>Streptophyta</taxon>
        <taxon>Embryophyta</taxon>
        <taxon>Tracheophyta</taxon>
        <taxon>Spermatophyta</taxon>
        <taxon>Magnoliopsida</taxon>
        <taxon>eudicotyledons</taxon>
        <taxon>Gunneridae</taxon>
        <taxon>Pentapetalae</taxon>
        <taxon>rosids</taxon>
        <taxon>malvids</taxon>
        <taxon>Brassicales</taxon>
        <taxon>Brassicaceae</taxon>
        <taxon>Camelineae</taxon>
        <taxon>Arabidopsis</taxon>
    </lineage>
</organism>
<comment type="function">
    <text evidence="1">DNA-dependent RNA polymerase catalyzes the transcription of DNA into RNA using the four ribonucleoside triphosphates as substrates. Second largest component of RNA polymerase II which synthesizes mRNA precursors and many functional non-coding RNAs. Proposed to contribute to the polymerase catalytic activity and forms the polymerase active center together with the largest subunit. Pol II is the central component of the basal RNA polymerase II transcription machinery. It is composed of mobile elements that move relative to each other. NRPB2 is part of the core element with the central large cleft, the clamp element that moves to open and close the cleft and the jaws that are thought to grab the incoming DNA template (By similarity).</text>
</comment>
<comment type="function">
    <text evidence="3">Essential for the completion of the three rounds of mitosis in female megaspores required for the development of mature gametophytes (PubMed:18723889).</text>
</comment>
<comment type="catalytic activity">
    <reaction>
        <text>RNA(n) + a ribonucleoside 5'-triphosphate = RNA(n+1) + diphosphate</text>
        <dbReference type="Rhea" id="RHEA:21248"/>
        <dbReference type="Rhea" id="RHEA-COMP:14527"/>
        <dbReference type="Rhea" id="RHEA-COMP:17342"/>
        <dbReference type="ChEBI" id="CHEBI:33019"/>
        <dbReference type="ChEBI" id="CHEBI:61557"/>
        <dbReference type="ChEBI" id="CHEBI:140395"/>
        <dbReference type="EC" id="2.7.7.6"/>
    </reaction>
</comment>
<comment type="subunit">
    <text evidence="4">Component of the RNA polymerase II complex consisting of at least 12 subunits.</text>
</comment>
<comment type="subcellular location">
    <subcellularLocation>
        <location evidence="1">Nucleus</location>
    </subcellularLocation>
</comment>
<comment type="disruption phenotype">
    <text evidence="3">Defect in seed production due to female gametophyte developmental arrest.</text>
</comment>
<comment type="miscellaneous">
    <text evidence="1">The binding of ribonucleoside triphosphate to the RNA polymerase II transcribing complex probably involves a two-step mechanism. The initial binding seems to occur at the entry (E) site and involves a magnesium ion coordinated by three conserved aspartate residues of the two largest RNA Pol II subunits (By similarity).</text>
</comment>
<comment type="similarity">
    <text evidence="5">Belongs to the RNA polymerase beta chain family.</text>
</comment>
<protein>
    <recommendedName>
        <fullName>DNA-directed RNA polymerase II subunit 2</fullName>
    </recommendedName>
    <alternativeName>
        <fullName>DNA-directed RNA polymerase II 135 kDa polypeptide</fullName>
    </alternativeName>
    <alternativeName>
        <fullName>DNA-directed RNA polymerase II subunit RPB2</fullName>
        <shortName>RNA polymerase II subunit 2</shortName>
        <shortName>RNA polymerase II subunit B2</shortName>
        <ecNumber>2.7.7.6</ecNumber>
    </alternativeName>
    <alternativeName>
        <fullName>Protein EMBRYO DEFECTIVE 1989</fullName>
    </alternativeName>
</protein>
<feature type="chain" id="PRO_0000048081" description="DNA-directed RNA polymerase II subunit 2">
    <location>
        <begin position="1"/>
        <end position="1188"/>
    </location>
</feature>
<feature type="zinc finger region" description="C4-type">
    <location>
        <begin position="1124"/>
        <end position="1145"/>
    </location>
</feature>
<feature type="region of interest" description="Disordered" evidence="2">
    <location>
        <begin position="852"/>
        <end position="871"/>
    </location>
</feature>
<feature type="region of interest" description="Disordered" evidence="2">
    <location>
        <begin position="877"/>
        <end position="897"/>
    </location>
</feature>
<feature type="compositionally biased region" description="Polar residues" evidence="2">
    <location>
        <begin position="879"/>
        <end position="892"/>
    </location>
</feature>
<feature type="binding site" evidence="1">
    <location>
        <position position="800"/>
    </location>
    <ligand>
        <name>Mg(2+)</name>
        <dbReference type="ChEBI" id="CHEBI:18420"/>
        <note>ligand shared with RPB1</note>
    </ligand>
</feature>
<feature type="binding site" evidence="1">
    <location>
        <position position="1124"/>
    </location>
    <ligand>
        <name>Zn(2+)</name>
        <dbReference type="ChEBI" id="CHEBI:29105"/>
    </ligand>
</feature>
<feature type="binding site" evidence="1">
    <location>
        <position position="1127"/>
    </location>
    <ligand>
        <name>Zn(2+)</name>
        <dbReference type="ChEBI" id="CHEBI:29105"/>
    </ligand>
</feature>
<feature type="binding site" evidence="1">
    <location>
        <position position="1142"/>
    </location>
    <ligand>
        <name>Zn(2+)</name>
        <dbReference type="ChEBI" id="CHEBI:29105"/>
    </ligand>
</feature>
<feature type="binding site" evidence="1">
    <location>
        <position position="1145"/>
    </location>
    <ligand>
        <name>Zn(2+)</name>
        <dbReference type="ChEBI" id="CHEBI:29105"/>
    </ligand>
</feature>
<feature type="sequence variant">
    <original>I</original>
    <variation>N</variation>
    <location>
        <position position="787"/>
    </location>
</feature>
<feature type="sequence conflict" description="In Ref. 1; CAA79527/CAA79528." evidence="5" ref="1">
    <original>PH</original>
    <variation>LY</variation>
    <location>
        <begin position="354"/>
        <end position="355"/>
    </location>
</feature>
<keyword id="KW-0240">DNA-directed RNA polymerase</keyword>
<keyword id="KW-0460">Magnesium</keyword>
<keyword id="KW-0479">Metal-binding</keyword>
<keyword id="KW-0548">Nucleotidyltransferase</keyword>
<keyword id="KW-0539">Nucleus</keyword>
<keyword id="KW-1185">Reference proteome</keyword>
<keyword id="KW-0804">Transcription</keyword>
<keyword id="KW-0808">Transferase</keyword>
<keyword id="KW-0862">Zinc</keyword>
<keyword id="KW-0863">Zinc-finger</keyword>
<sequence>MEYNEYEPEPQYVEDDDDEEITQEDAWAVISAYFEEKGLVRQQLDSFDEFIQNTMQEIVDESADIEIRPESQHNPGHQSDFAETIYKISFGQIYLSKPMMTESDGETATLFPKAARLRNLTYSAPLYVDVTKRVIKKGHDGEEVTETQDFTKVFIGKVPIMLRSSYCTLFQNSEKDLTELGECPYDQGGYFIINGSEKVLIAQEKMSTNHVYVFKKRQPNKYAYVGEVRSMAENQNRPPSTMFVRMLARASAKGGSSGQYIRCTLPYIRTEIPIIIVFRALGFVADKDILEHICYDFADTQMMELLRPSLEEAFVIQNQLVALDYIGKRGATVGVTKEKRIKYARDILQKEMLPHVGIGEHCETKKAYYFGYIIHRLLLCALGRRPEDDRDHYGNKRLDLAGPLLGGLFRMLFRKLTRDVRSYVQKCVDNGKEVNLQFAIKAKTITSGLKYSLATGNWGQANAAGTRAGVSQVLNRLTYASTLSHLRRLNSPIGREGKLAKPRQLHNSQWGMMCPAETPEGQACGLVKNLALMVYITVGSAAYPILEFLEEWGTENFEEISPSVIPQATKIFVNGMWVGVHRDPDMLVKTLRRLRRRVDVNTEVGVVRDIRLKELRIYTDYGRCSRPLFIVDNQKLLIKKRDIYALQQRESAEEDGWHHLVAKGFIEYIDTEEEETTMISMTISDLVQARLRPEEAYTENYTHCEIHPSLILGVCASIIPFPDHNQSPRNTYQSAMGKQAMGIYVTNYQFRMDTLAYVLYYPQKPLVTTRAMEHLHFRQLPAGINAIVAISCYSGYNQEDSVIMNQSSIDRGFFRSLFFRSYRDEEKKMGTLVKEDFGRPDRGSTMGMRHGSYDKLDDDGLAPPGTRVSGEDVIIGKTTPISQDEAQGQSSRYTRRDHSISLRHSETGMVDQVLLTTNADGLRFVKVRVRSVRIPQIGDKFSSRHGQKGTVGMTYTQEDMPWTIEGVTPDIIVNPHAIPSRMTIGQLIECIMGKVAAHMGKEGDATPFTDVTVDNISKALHKCGYQMRGFERMYNGHTGRPLTAMIFLGPTYYQRLKHMVDDKIHSRGRGPVQILTRQPAEGRSRDGGLRFGEMERDCMIAHGAAHFLKERLFDQSDAYRVHVCEVCGLIAIANLKKNSFECRGCKNKTDIVQVYIPYACKLLFQELMSMAIAPRMLTKHLKSAKGRQ</sequence>
<evidence type="ECO:0000250" key="1"/>
<evidence type="ECO:0000256" key="2">
    <source>
        <dbReference type="SAM" id="MobiDB-lite"/>
    </source>
</evidence>
<evidence type="ECO:0000269" key="3">
    <source>
    </source>
</evidence>
<evidence type="ECO:0000269" key="4">
    <source>
    </source>
</evidence>
<evidence type="ECO:0000305" key="5"/>
<accession>P38420</accession>
<accession>Q9SVS6</accession>